<accession>Q8X239</accession>
<accession>Q4JB85</accession>
<evidence type="ECO:0000255" key="1">
    <source>
        <dbReference type="HAMAP-Rule" id="MF_01510"/>
    </source>
</evidence>
<evidence type="ECO:0000305" key="2"/>
<dbReference type="EC" id="6.3.5.2" evidence="1"/>
<dbReference type="EMBL" id="CP000077">
    <property type="protein sequence ID" value="AAY79944.1"/>
    <property type="molecule type" value="Genomic_DNA"/>
</dbReference>
<dbReference type="EMBL" id="AJ132638">
    <property type="protein sequence ID" value="CAC80124.1"/>
    <property type="status" value="ALT_INIT"/>
    <property type="molecule type" value="Genomic_DNA"/>
</dbReference>
<dbReference type="RefSeq" id="WP_011277446.1">
    <property type="nucleotide sequence ID" value="NC_007181.1"/>
</dbReference>
<dbReference type="SMR" id="Q8X239"/>
<dbReference type="STRING" id="330779.Saci_0548"/>
<dbReference type="MEROPS" id="C26.A31"/>
<dbReference type="GeneID" id="14551074"/>
<dbReference type="KEGG" id="sai:Saci_0548"/>
<dbReference type="PATRIC" id="fig|330779.12.peg.533"/>
<dbReference type="eggNOG" id="arCOG00087">
    <property type="taxonomic scope" value="Archaea"/>
</dbReference>
<dbReference type="HOGENOM" id="CLU_014340_1_4_2"/>
<dbReference type="UniPathway" id="UPA00189">
    <property type="reaction ID" value="UER00296"/>
</dbReference>
<dbReference type="Proteomes" id="UP000001018">
    <property type="component" value="Chromosome"/>
</dbReference>
<dbReference type="GO" id="GO:0005829">
    <property type="term" value="C:cytosol"/>
    <property type="evidence" value="ECO:0007669"/>
    <property type="project" value="TreeGrafter"/>
</dbReference>
<dbReference type="GO" id="GO:0005524">
    <property type="term" value="F:ATP binding"/>
    <property type="evidence" value="ECO:0007669"/>
    <property type="project" value="UniProtKB-KW"/>
</dbReference>
<dbReference type="GO" id="GO:0003921">
    <property type="term" value="F:GMP synthase activity"/>
    <property type="evidence" value="ECO:0007669"/>
    <property type="project" value="TreeGrafter"/>
</dbReference>
<dbReference type="CDD" id="cd01742">
    <property type="entry name" value="GATase1_GMP_Synthase"/>
    <property type="match status" value="1"/>
</dbReference>
<dbReference type="FunFam" id="3.40.50.880:FF:000047">
    <property type="entry name" value="GMP synthase [glutamine-hydrolyzing] subunit A"/>
    <property type="match status" value="1"/>
</dbReference>
<dbReference type="Gene3D" id="3.40.50.880">
    <property type="match status" value="1"/>
</dbReference>
<dbReference type="HAMAP" id="MF_01510">
    <property type="entry name" value="GMP_synthase_A"/>
    <property type="match status" value="1"/>
</dbReference>
<dbReference type="InterPro" id="IPR029062">
    <property type="entry name" value="Class_I_gatase-like"/>
</dbReference>
<dbReference type="InterPro" id="IPR017926">
    <property type="entry name" value="GATASE"/>
</dbReference>
<dbReference type="InterPro" id="IPR004739">
    <property type="entry name" value="GMP_synth_GATase"/>
</dbReference>
<dbReference type="InterPro" id="IPR023686">
    <property type="entry name" value="GMP_synthase_A"/>
</dbReference>
<dbReference type="NCBIfam" id="TIGR00888">
    <property type="entry name" value="guaA_Nterm"/>
    <property type="match status" value="1"/>
</dbReference>
<dbReference type="NCBIfam" id="NF001975">
    <property type="entry name" value="PRK00758.1"/>
    <property type="match status" value="1"/>
</dbReference>
<dbReference type="PANTHER" id="PTHR11922:SF2">
    <property type="entry name" value="GMP SYNTHASE [GLUTAMINE-HYDROLYZING]"/>
    <property type="match status" value="1"/>
</dbReference>
<dbReference type="PANTHER" id="PTHR11922">
    <property type="entry name" value="GMP SYNTHASE-RELATED"/>
    <property type="match status" value="1"/>
</dbReference>
<dbReference type="Pfam" id="PF00117">
    <property type="entry name" value="GATase"/>
    <property type="match status" value="1"/>
</dbReference>
<dbReference type="PRINTS" id="PR00097">
    <property type="entry name" value="ANTSNTHASEII"/>
</dbReference>
<dbReference type="PRINTS" id="PR00096">
    <property type="entry name" value="GATASE"/>
</dbReference>
<dbReference type="SUPFAM" id="SSF52317">
    <property type="entry name" value="Class I glutamine amidotransferase-like"/>
    <property type="match status" value="1"/>
</dbReference>
<dbReference type="PROSITE" id="PS51273">
    <property type="entry name" value="GATASE_TYPE_1"/>
    <property type="match status" value="1"/>
</dbReference>
<comment type="function">
    <text evidence="1">Catalyzes the synthesis of GMP from XMP.</text>
</comment>
<comment type="catalytic activity">
    <reaction evidence="1">
        <text>XMP + L-glutamine + ATP + H2O = GMP + L-glutamate + AMP + diphosphate + 2 H(+)</text>
        <dbReference type="Rhea" id="RHEA:11680"/>
        <dbReference type="ChEBI" id="CHEBI:15377"/>
        <dbReference type="ChEBI" id="CHEBI:15378"/>
        <dbReference type="ChEBI" id="CHEBI:29985"/>
        <dbReference type="ChEBI" id="CHEBI:30616"/>
        <dbReference type="ChEBI" id="CHEBI:33019"/>
        <dbReference type="ChEBI" id="CHEBI:57464"/>
        <dbReference type="ChEBI" id="CHEBI:58115"/>
        <dbReference type="ChEBI" id="CHEBI:58359"/>
        <dbReference type="ChEBI" id="CHEBI:456215"/>
        <dbReference type="EC" id="6.3.5.2"/>
    </reaction>
</comment>
<comment type="pathway">
    <text evidence="1">Purine metabolism; GMP biosynthesis; GMP from XMP (L-Gln route): step 1/1.</text>
</comment>
<comment type="subunit">
    <text evidence="1">Heterodimer composed of a glutamine amidotransferase subunit (A) and a GMP-binding subunit (B).</text>
</comment>
<comment type="sequence caution" evidence="2">
    <conflict type="erroneous initiation">
        <sequence resource="EMBL-CDS" id="CAC80124"/>
    </conflict>
</comment>
<name>GUAAA_SULAC</name>
<reference key="1">
    <citation type="journal article" date="2005" name="J. Bacteriol.">
        <title>The genome of Sulfolobus acidocaldarius, a model organism of the Crenarchaeota.</title>
        <authorList>
            <person name="Chen L."/>
            <person name="Bruegger K."/>
            <person name="Skovgaard M."/>
            <person name="Redder P."/>
            <person name="She Q."/>
            <person name="Torarinsson E."/>
            <person name="Greve B."/>
            <person name="Awayez M."/>
            <person name="Zibat A."/>
            <person name="Klenk H.-P."/>
            <person name="Garrett R.A."/>
        </authorList>
    </citation>
    <scope>NUCLEOTIDE SEQUENCE [LARGE SCALE GENOMIC DNA]</scope>
    <source>
        <strain>ATCC 33909 / DSM 639 / JCM 8929 / NBRC 15157 / NCIMB 11770</strain>
    </source>
</reference>
<reference key="2">
    <citation type="submission" date="1999-02" db="EMBL/GenBank/DDBJ databases">
        <title>Genomic sequence coding for putative GMP synthase and quinolate phosphoribosyltransferase from Sulfolobus acidocaldarius.</title>
        <authorList>
            <person name="Komorowski L."/>
            <person name="Schaefer G."/>
        </authorList>
    </citation>
    <scope>NUCLEOTIDE SEQUENCE [GENOMIC DNA] OF 21-188</scope>
    <source>
        <strain>ATCC 33909 / DSM 639 / JCM 8929 / NBRC 15157 / NCIMB 11770</strain>
    </source>
</reference>
<keyword id="KW-0067">ATP-binding</keyword>
<keyword id="KW-0315">Glutamine amidotransferase</keyword>
<keyword id="KW-0332">GMP biosynthesis</keyword>
<keyword id="KW-0436">Ligase</keyword>
<keyword id="KW-0547">Nucleotide-binding</keyword>
<keyword id="KW-0658">Purine biosynthesis</keyword>
<keyword id="KW-1185">Reference proteome</keyword>
<protein>
    <recommendedName>
        <fullName evidence="1">GMP synthase [glutamine-hydrolyzing] subunit A</fullName>
        <ecNumber evidence="1">6.3.5.2</ecNumber>
    </recommendedName>
    <alternativeName>
        <fullName evidence="1">Glutamine amidotransferase</fullName>
    </alternativeName>
</protein>
<proteinExistence type="inferred from homology"/>
<feature type="chain" id="PRO_0000140232" description="GMP synthase [glutamine-hydrolyzing] subunit A">
    <location>
        <begin position="1"/>
        <end position="188"/>
    </location>
</feature>
<feature type="domain" description="Glutamine amidotransferase type-1" evidence="1">
    <location>
        <begin position="2"/>
        <end position="188"/>
    </location>
</feature>
<feature type="active site" description="Nucleophile" evidence="1">
    <location>
        <position position="79"/>
    </location>
</feature>
<feature type="active site" evidence="1">
    <location>
        <position position="166"/>
    </location>
</feature>
<feature type="active site" evidence="1">
    <location>
        <position position="168"/>
    </location>
</feature>
<organism>
    <name type="scientific">Sulfolobus acidocaldarius (strain ATCC 33909 / DSM 639 / JCM 8929 / NBRC 15157 / NCIMB 11770)</name>
    <dbReference type="NCBI Taxonomy" id="330779"/>
    <lineage>
        <taxon>Archaea</taxon>
        <taxon>Thermoproteota</taxon>
        <taxon>Thermoprotei</taxon>
        <taxon>Sulfolobales</taxon>
        <taxon>Sulfolobaceae</taxon>
        <taxon>Sulfolobus</taxon>
    </lineage>
</organism>
<gene>
    <name evidence="1" type="primary">guaAA</name>
    <name type="synonym">guaA</name>
    <name type="ordered locus">Saci_0548</name>
</gene>
<sequence>MKVAVIYFGGQYNHLIVKDLKYLGLEAVAITPDKSVEELKEFDSVVFGGGPYSVINELDKMGFAPDYVKSLNVPKLGICLGHQLIAKVLGGEVRKANKPEYGLTTVNIVDEDTILRGLKPSIKAWESHNDEVVRPPSGFRILASSENAKVQAMVNNDNSIFGVQFHPEVKHTEKGIEVFKNFIKICRK</sequence>